<dbReference type="EMBL" id="CP001089">
    <property type="protein sequence ID" value="ACD95058.1"/>
    <property type="molecule type" value="Genomic_DNA"/>
</dbReference>
<dbReference type="RefSeq" id="WP_012469404.1">
    <property type="nucleotide sequence ID" value="NC_010814.1"/>
</dbReference>
<dbReference type="SMR" id="B3E7S6"/>
<dbReference type="STRING" id="398767.Glov_1337"/>
<dbReference type="KEGG" id="glo:Glov_1337"/>
<dbReference type="eggNOG" id="COG0244">
    <property type="taxonomic scope" value="Bacteria"/>
</dbReference>
<dbReference type="HOGENOM" id="CLU_092227_0_0_7"/>
<dbReference type="OrthoDB" id="3186107at2"/>
<dbReference type="Proteomes" id="UP000002420">
    <property type="component" value="Chromosome"/>
</dbReference>
<dbReference type="GO" id="GO:0015934">
    <property type="term" value="C:large ribosomal subunit"/>
    <property type="evidence" value="ECO:0007669"/>
    <property type="project" value="InterPro"/>
</dbReference>
<dbReference type="GO" id="GO:0070180">
    <property type="term" value="F:large ribosomal subunit rRNA binding"/>
    <property type="evidence" value="ECO:0007669"/>
    <property type="project" value="UniProtKB-UniRule"/>
</dbReference>
<dbReference type="GO" id="GO:0003735">
    <property type="term" value="F:structural constituent of ribosome"/>
    <property type="evidence" value="ECO:0007669"/>
    <property type="project" value="InterPro"/>
</dbReference>
<dbReference type="GO" id="GO:0006412">
    <property type="term" value="P:translation"/>
    <property type="evidence" value="ECO:0007669"/>
    <property type="project" value="UniProtKB-UniRule"/>
</dbReference>
<dbReference type="CDD" id="cd05797">
    <property type="entry name" value="Ribosomal_L10"/>
    <property type="match status" value="1"/>
</dbReference>
<dbReference type="Gene3D" id="3.30.70.1730">
    <property type="match status" value="1"/>
</dbReference>
<dbReference type="Gene3D" id="6.10.250.290">
    <property type="match status" value="1"/>
</dbReference>
<dbReference type="HAMAP" id="MF_00362">
    <property type="entry name" value="Ribosomal_uL10"/>
    <property type="match status" value="1"/>
</dbReference>
<dbReference type="InterPro" id="IPR001790">
    <property type="entry name" value="Ribosomal_uL10"/>
</dbReference>
<dbReference type="InterPro" id="IPR043141">
    <property type="entry name" value="Ribosomal_uL10-like_sf"/>
</dbReference>
<dbReference type="InterPro" id="IPR022973">
    <property type="entry name" value="Ribosomal_uL10_bac"/>
</dbReference>
<dbReference type="InterPro" id="IPR047865">
    <property type="entry name" value="Ribosomal_uL10_bac_type"/>
</dbReference>
<dbReference type="InterPro" id="IPR002363">
    <property type="entry name" value="Ribosomal_uL10_CS_bac"/>
</dbReference>
<dbReference type="NCBIfam" id="NF000955">
    <property type="entry name" value="PRK00099.1-1"/>
    <property type="match status" value="1"/>
</dbReference>
<dbReference type="PANTHER" id="PTHR11560">
    <property type="entry name" value="39S RIBOSOMAL PROTEIN L10, MITOCHONDRIAL"/>
    <property type="match status" value="1"/>
</dbReference>
<dbReference type="Pfam" id="PF00466">
    <property type="entry name" value="Ribosomal_L10"/>
    <property type="match status" value="1"/>
</dbReference>
<dbReference type="SUPFAM" id="SSF160369">
    <property type="entry name" value="Ribosomal protein L10-like"/>
    <property type="match status" value="1"/>
</dbReference>
<dbReference type="PROSITE" id="PS01109">
    <property type="entry name" value="RIBOSOMAL_L10"/>
    <property type="match status" value="1"/>
</dbReference>
<organism>
    <name type="scientific">Trichlorobacter lovleyi (strain ATCC BAA-1151 / DSM 17278 / SZ)</name>
    <name type="common">Geobacter lovleyi</name>
    <dbReference type="NCBI Taxonomy" id="398767"/>
    <lineage>
        <taxon>Bacteria</taxon>
        <taxon>Pseudomonadati</taxon>
        <taxon>Thermodesulfobacteriota</taxon>
        <taxon>Desulfuromonadia</taxon>
        <taxon>Geobacterales</taxon>
        <taxon>Geobacteraceae</taxon>
        <taxon>Trichlorobacter</taxon>
    </lineage>
</organism>
<evidence type="ECO:0000255" key="1">
    <source>
        <dbReference type="HAMAP-Rule" id="MF_00362"/>
    </source>
</evidence>
<evidence type="ECO:0000305" key="2"/>
<feature type="chain" id="PRO_1000120969" description="Large ribosomal subunit protein uL10">
    <location>
        <begin position="1"/>
        <end position="174"/>
    </location>
</feature>
<proteinExistence type="inferred from homology"/>
<sequence>MKKSVKQEQVTQMHDKLLRAKAVFLADFRGMNVDKATTLRNELRSASVEYKVFKNTLFDIAAKETEAACLAPYLAGPTAVAISYDDPVGAAKVLSKFAKDSKGVFVLKAGVLSGKVIDVNQIQALADLPSREVLIAKMLGSMQAPATNFVGVLAALPGSLVRALDAIRAKKEGN</sequence>
<comment type="function">
    <text evidence="1">Forms part of the ribosomal stalk, playing a central role in the interaction of the ribosome with GTP-bound translation factors.</text>
</comment>
<comment type="subunit">
    <text evidence="1">Part of the ribosomal stalk of the 50S ribosomal subunit. The N-terminus interacts with L11 and the large rRNA to form the base of the stalk. The C-terminus forms an elongated spine to which L12 dimers bind in a sequential fashion forming a multimeric L10(L12)X complex.</text>
</comment>
<comment type="similarity">
    <text evidence="1">Belongs to the universal ribosomal protein uL10 family.</text>
</comment>
<protein>
    <recommendedName>
        <fullName evidence="1">Large ribosomal subunit protein uL10</fullName>
    </recommendedName>
    <alternativeName>
        <fullName evidence="2">50S ribosomal protein L10</fullName>
    </alternativeName>
</protein>
<accession>B3E7S6</accession>
<keyword id="KW-1185">Reference proteome</keyword>
<keyword id="KW-0687">Ribonucleoprotein</keyword>
<keyword id="KW-0689">Ribosomal protein</keyword>
<keyword id="KW-0694">RNA-binding</keyword>
<keyword id="KW-0699">rRNA-binding</keyword>
<name>RL10_TRIL1</name>
<reference key="1">
    <citation type="submission" date="2008-05" db="EMBL/GenBank/DDBJ databases">
        <title>Complete sequence of chromosome of Geobacter lovleyi SZ.</title>
        <authorList>
            <consortium name="US DOE Joint Genome Institute"/>
            <person name="Lucas S."/>
            <person name="Copeland A."/>
            <person name="Lapidus A."/>
            <person name="Glavina del Rio T."/>
            <person name="Dalin E."/>
            <person name="Tice H."/>
            <person name="Bruce D."/>
            <person name="Goodwin L."/>
            <person name="Pitluck S."/>
            <person name="Chertkov O."/>
            <person name="Meincke L."/>
            <person name="Brettin T."/>
            <person name="Detter J.C."/>
            <person name="Han C."/>
            <person name="Tapia R."/>
            <person name="Kuske C.R."/>
            <person name="Schmutz J."/>
            <person name="Larimer F."/>
            <person name="Land M."/>
            <person name="Hauser L."/>
            <person name="Kyrpides N."/>
            <person name="Mikhailova N."/>
            <person name="Sung Y."/>
            <person name="Fletcher K.E."/>
            <person name="Ritalahti K.M."/>
            <person name="Loeffler F.E."/>
            <person name="Richardson P."/>
        </authorList>
    </citation>
    <scope>NUCLEOTIDE SEQUENCE [LARGE SCALE GENOMIC DNA]</scope>
    <source>
        <strain>ATCC BAA-1151 / DSM 17278 / SZ</strain>
    </source>
</reference>
<gene>
    <name evidence="1" type="primary">rplJ</name>
    <name type="ordered locus">Glov_1337</name>
</gene>